<dbReference type="EMBL" id="CP000993">
    <property type="protein sequence ID" value="ACH94358.1"/>
    <property type="molecule type" value="Genomic_DNA"/>
</dbReference>
<dbReference type="RefSeq" id="WP_012538657.1">
    <property type="nucleotide sequence ID" value="NZ_CP169983.1"/>
</dbReference>
<dbReference type="SMR" id="B5RQS4"/>
<dbReference type="KEGG" id="bre:BRE_98"/>
<dbReference type="HOGENOM" id="CLU_105793_0_1_12"/>
<dbReference type="Proteomes" id="UP000000612">
    <property type="component" value="Chromosome"/>
</dbReference>
<dbReference type="GO" id="GO:0033178">
    <property type="term" value="C:proton-transporting two-sector ATPase complex, catalytic domain"/>
    <property type="evidence" value="ECO:0007669"/>
    <property type="project" value="InterPro"/>
</dbReference>
<dbReference type="GO" id="GO:0005524">
    <property type="term" value="F:ATP binding"/>
    <property type="evidence" value="ECO:0007669"/>
    <property type="project" value="UniProtKB-UniRule"/>
</dbReference>
<dbReference type="GO" id="GO:0046933">
    <property type="term" value="F:proton-transporting ATP synthase activity, rotational mechanism"/>
    <property type="evidence" value="ECO:0007669"/>
    <property type="project" value="UniProtKB-UniRule"/>
</dbReference>
<dbReference type="GO" id="GO:0046961">
    <property type="term" value="F:proton-transporting ATPase activity, rotational mechanism"/>
    <property type="evidence" value="ECO:0007669"/>
    <property type="project" value="InterPro"/>
</dbReference>
<dbReference type="GO" id="GO:0042777">
    <property type="term" value="P:proton motive force-driven plasma membrane ATP synthesis"/>
    <property type="evidence" value="ECO:0007669"/>
    <property type="project" value="UniProtKB-UniRule"/>
</dbReference>
<dbReference type="Gene3D" id="3.30.2320.30">
    <property type="entry name" value="ATP synthase, E subunit, C-terminal"/>
    <property type="match status" value="1"/>
</dbReference>
<dbReference type="HAMAP" id="MF_00311">
    <property type="entry name" value="ATP_synth_E_arch"/>
    <property type="match status" value="1"/>
</dbReference>
<dbReference type="InterPro" id="IPR038495">
    <property type="entry name" value="ATPase_E_C"/>
</dbReference>
<dbReference type="InterPro" id="IPR002842">
    <property type="entry name" value="ATPase_V1_Esu"/>
</dbReference>
<dbReference type="NCBIfam" id="NF002424">
    <property type="entry name" value="PRK01558.1"/>
    <property type="match status" value="1"/>
</dbReference>
<dbReference type="SUPFAM" id="SSF160527">
    <property type="entry name" value="V-type ATPase subunit E-like"/>
    <property type="match status" value="1"/>
</dbReference>
<protein>
    <recommendedName>
        <fullName evidence="1">V-type proton ATPase subunit E</fullName>
    </recommendedName>
    <alternativeName>
        <fullName evidence="1">V-ATPase subunit E</fullName>
    </alternativeName>
</protein>
<gene>
    <name evidence="1" type="primary">atpE</name>
    <name type="ordered locus">BRE_98</name>
</gene>
<accession>B5RQS4</accession>
<evidence type="ECO:0000255" key="1">
    <source>
        <dbReference type="HAMAP-Rule" id="MF_00311"/>
    </source>
</evidence>
<sequence length="198" mass="22772">MQFEVKDLINKIKKDGLDEAERLASEIILNAKQEAEAIILKAESEAKELKIKAEKEAYDYKRYSLEASRQAFRDLVIGTENSIKSLFKSALKDSVSSVYDSNFLRELIIRVLDVWGKDDKIDIMLNESDIDNLSSILKTSIRNKFGAEIEIKPFKGINKGFKVQQRDGSLYYDFTSEAIADILFEYLNPRFKEIIKLD</sequence>
<comment type="function">
    <text evidence="1">Produces ATP from ADP in the presence of a proton gradient across the membrane.</text>
</comment>
<comment type="similarity">
    <text evidence="1">Belongs to the V-ATPase E subunit family.</text>
</comment>
<proteinExistence type="inferred from homology"/>
<name>VATE_BORRA</name>
<keyword id="KW-0066">ATP synthesis</keyword>
<keyword id="KW-0375">Hydrogen ion transport</keyword>
<keyword id="KW-0406">Ion transport</keyword>
<keyword id="KW-0813">Transport</keyword>
<organism>
    <name type="scientific">Borrelia recurrentis (strain A1)</name>
    <dbReference type="NCBI Taxonomy" id="412418"/>
    <lineage>
        <taxon>Bacteria</taxon>
        <taxon>Pseudomonadati</taxon>
        <taxon>Spirochaetota</taxon>
        <taxon>Spirochaetia</taxon>
        <taxon>Spirochaetales</taxon>
        <taxon>Borreliaceae</taxon>
        <taxon>Borrelia</taxon>
    </lineage>
</organism>
<feature type="chain" id="PRO_1000119528" description="V-type proton ATPase subunit E">
    <location>
        <begin position="1"/>
        <end position="198"/>
    </location>
</feature>
<reference key="1">
    <citation type="journal article" date="2008" name="PLoS Genet.">
        <title>The genome of Borrelia recurrentis, the agent of deadly louse-borne relapsing fever, is a degraded subset of tick-borne Borrelia duttonii.</title>
        <authorList>
            <person name="Lescot M."/>
            <person name="Audic S."/>
            <person name="Robert C."/>
            <person name="Nguyen T.T."/>
            <person name="Blanc G."/>
            <person name="Cutler S.J."/>
            <person name="Wincker P."/>
            <person name="Couloux A."/>
            <person name="Claverie J.-M."/>
            <person name="Raoult D."/>
            <person name="Drancourt M."/>
        </authorList>
    </citation>
    <scope>NUCLEOTIDE SEQUENCE [LARGE SCALE GENOMIC DNA]</scope>
    <source>
        <strain>A1</strain>
    </source>
</reference>